<sequence length="530" mass="60563">MSAKEKFTSLSPAEFFKRNPELAGFPNPARALYQTVRELIENSLDATDVHGILPNIKITIDLIDEARQIYKVNVVDNGIGIPPQEVPNAFGRVLYSSKYVNRQTRGMYGLGVKAAVLYSQMHQDKPIEIETSPANSKRIYTFKLKIDINKNEPIIVERGSVENTRGFHGTSVAISIPGDWPKAKSRIYEYIKRTYIITPYAEFIFKDPEGNVTYYPRLTNKIPKPPQEVKPHPYGVDREEIKILINNLKRDYTIKEFLVNEFQSIGDTTADKILELAGLKPNKKVKNLTEEEITRLVETFKKYEDFRSPSADSLSVIGEDLIELGLKKIFNPDFAASITRKPKAYQGHPFIVEAGVAFGGSIPVGEEPIVLRYANKIPLIYDEKSDVIWKVVEELDWKRYGIESDQYQMVVMVHLCSTKIPYKSAGKESIAEVEDIEKEIKNALMEVARKLKQYLSEKRKEQEAKKKLLAYLKYIPEVSRSLATFLASGNKELVSKYQNEISEGLFKLISKKLDLINIEEYRKVYRVDSE</sequence>
<gene>
    <name evidence="1" type="primary">top6B</name>
    <name type="ordered locus">LS215_1342</name>
</gene>
<evidence type="ECO:0000255" key="1">
    <source>
        <dbReference type="HAMAP-Rule" id="MF_00322"/>
    </source>
</evidence>
<dbReference type="EC" id="5.6.2.2" evidence="1"/>
<dbReference type="EMBL" id="CP001399">
    <property type="protein sequence ID" value="ACP35350.1"/>
    <property type="molecule type" value="Genomic_DNA"/>
</dbReference>
<dbReference type="RefSeq" id="WP_012711263.1">
    <property type="nucleotide sequence ID" value="NC_012589.1"/>
</dbReference>
<dbReference type="SMR" id="C3MPN7"/>
<dbReference type="KEGG" id="sis:LS215_1342"/>
<dbReference type="HOGENOM" id="CLU_006403_0_0_2"/>
<dbReference type="OrthoDB" id="65493at2157"/>
<dbReference type="Proteomes" id="UP000001747">
    <property type="component" value="Chromosome"/>
</dbReference>
<dbReference type="GO" id="GO:0005524">
    <property type="term" value="F:ATP binding"/>
    <property type="evidence" value="ECO:0007669"/>
    <property type="project" value="UniProtKB-UniRule"/>
</dbReference>
<dbReference type="GO" id="GO:0003677">
    <property type="term" value="F:DNA binding"/>
    <property type="evidence" value="ECO:0007669"/>
    <property type="project" value="UniProtKB-UniRule"/>
</dbReference>
<dbReference type="GO" id="GO:0003918">
    <property type="term" value="F:DNA topoisomerase type II (double strand cut, ATP-hydrolyzing) activity"/>
    <property type="evidence" value="ECO:0007669"/>
    <property type="project" value="UniProtKB-UniRule"/>
</dbReference>
<dbReference type="GO" id="GO:0006265">
    <property type="term" value="P:DNA topological change"/>
    <property type="evidence" value="ECO:0007669"/>
    <property type="project" value="UniProtKB-UniRule"/>
</dbReference>
<dbReference type="CDD" id="cd16933">
    <property type="entry name" value="HATPase_TopVIB-like"/>
    <property type="match status" value="1"/>
</dbReference>
<dbReference type="CDD" id="cd00823">
    <property type="entry name" value="TopoIIB_Trans"/>
    <property type="match status" value="1"/>
</dbReference>
<dbReference type="FunFam" id="1.10.8.50:FF:000014">
    <property type="entry name" value="Type 2 DNA topoisomerase 6 subunit B"/>
    <property type="match status" value="1"/>
</dbReference>
<dbReference type="FunFam" id="3.30.230.10:FF:000091">
    <property type="entry name" value="Type 2 DNA topoisomerase 6 subunit B"/>
    <property type="match status" value="1"/>
</dbReference>
<dbReference type="FunFam" id="3.30.565.10:FF:000062">
    <property type="entry name" value="Type 2 DNA topoisomerase 6 subunit B"/>
    <property type="match status" value="1"/>
</dbReference>
<dbReference type="Gene3D" id="1.10.8.50">
    <property type="match status" value="1"/>
</dbReference>
<dbReference type="Gene3D" id="3.30.230.10">
    <property type="match status" value="1"/>
</dbReference>
<dbReference type="Gene3D" id="3.30.565.10">
    <property type="entry name" value="Histidine kinase-like ATPase, C-terminal domain"/>
    <property type="match status" value="1"/>
</dbReference>
<dbReference type="HAMAP" id="MF_00322">
    <property type="entry name" value="Top6B"/>
    <property type="match status" value="1"/>
</dbReference>
<dbReference type="InterPro" id="IPR036890">
    <property type="entry name" value="HATPase_C_sf"/>
</dbReference>
<dbReference type="InterPro" id="IPR020568">
    <property type="entry name" value="Ribosomal_Su5_D2-typ_SF"/>
</dbReference>
<dbReference type="InterPro" id="IPR010979">
    <property type="entry name" value="Ribosomal_uS13-like_H2TH"/>
</dbReference>
<dbReference type="InterPro" id="IPR014721">
    <property type="entry name" value="Ribsml_uS5_D2-typ_fold_subgr"/>
</dbReference>
<dbReference type="InterPro" id="IPR005734">
    <property type="entry name" value="TopoVI_B"/>
</dbReference>
<dbReference type="InterPro" id="IPR015320">
    <property type="entry name" value="TopoVI_B_transducer"/>
</dbReference>
<dbReference type="NCBIfam" id="NF003218">
    <property type="entry name" value="PRK04184.1"/>
    <property type="match status" value="1"/>
</dbReference>
<dbReference type="NCBIfam" id="TIGR01052">
    <property type="entry name" value="top6b"/>
    <property type="match status" value="1"/>
</dbReference>
<dbReference type="PANTHER" id="PTHR48444">
    <property type="entry name" value="DNA TOPOISOMERASE 6 SUBUNIT B"/>
    <property type="match status" value="1"/>
</dbReference>
<dbReference type="PANTHER" id="PTHR48444:SF1">
    <property type="entry name" value="DNA TOPOISOMERASE 6 SUBUNIT B"/>
    <property type="match status" value="1"/>
</dbReference>
<dbReference type="Pfam" id="PF02518">
    <property type="entry name" value="HATPase_c"/>
    <property type="match status" value="1"/>
</dbReference>
<dbReference type="Pfam" id="PF05833">
    <property type="entry name" value="NFACT_N"/>
    <property type="match status" value="1"/>
</dbReference>
<dbReference type="Pfam" id="PF09239">
    <property type="entry name" value="Topo-VIb_trans"/>
    <property type="match status" value="1"/>
</dbReference>
<dbReference type="PIRSF" id="PIRSF006553">
    <property type="entry name" value="TopoVI_B"/>
    <property type="match status" value="1"/>
</dbReference>
<dbReference type="SMART" id="SM00387">
    <property type="entry name" value="HATPase_c"/>
    <property type="match status" value="1"/>
</dbReference>
<dbReference type="SUPFAM" id="SSF55874">
    <property type="entry name" value="ATPase domain of HSP90 chaperone/DNA topoisomerase II/histidine kinase"/>
    <property type="match status" value="1"/>
</dbReference>
<dbReference type="SUPFAM" id="SSF54211">
    <property type="entry name" value="Ribosomal protein S5 domain 2-like"/>
    <property type="match status" value="1"/>
</dbReference>
<dbReference type="SUPFAM" id="SSF46946">
    <property type="entry name" value="S13-like H2TH domain"/>
    <property type="match status" value="1"/>
</dbReference>
<feature type="chain" id="PRO_1000205144" description="Type 2 DNA topoisomerase 6 subunit B">
    <location>
        <begin position="1"/>
        <end position="530"/>
    </location>
</feature>
<feature type="binding site" evidence="1">
    <location>
        <position position="42"/>
    </location>
    <ligand>
        <name>ATP</name>
        <dbReference type="ChEBI" id="CHEBI:30616"/>
    </ligand>
</feature>
<feature type="binding site" evidence="1">
    <location>
        <position position="76"/>
    </location>
    <ligand>
        <name>ATP</name>
        <dbReference type="ChEBI" id="CHEBI:30616"/>
    </ligand>
</feature>
<feature type="binding site" evidence="1">
    <location>
        <begin position="97"/>
        <end position="98"/>
    </location>
    <ligand>
        <name>ATP</name>
        <dbReference type="ChEBI" id="CHEBI:30616"/>
    </ligand>
</feature>
<feature type="binding site" evidence="1">
    <location>
        <begin position="106"/>
        <end position="113"/>
    </location>
    <ligand>
        <name>ATP</name>
        <dbReference type="ChEBI" id="CHEBI:30616"/>
    </ligand>
</feature>
<feature type="binding site" evidence="1">
    <location>
        <position position="427"/>
    </location>
    <ligand>
        <name>ATP</name>
        <dbReference type="ChEBI" id="CHEBI:30616"/>
    </ligand>
</feature>
<comment type="function">
    <text evidence="1">Relaxes both positive and negative superturns and exhibits a strong decatenase activity.</text>
</comment>
<comment type="catalytic activity">
    <reaction evidence="1">
        <text>ATP-dependent breakage, passage and rejoining of double-stranded DNA.</text>
        <dbReference type="EC" id="5.6.2.2"/>
    </reaction>
</comment>
<comment type="subunit">
    <text evidence="1">Homodimer. Heterotetramer of two Top6A and two Top6B chains.</text>
</comment>
<comment type="similarity">
    <text evidence="1">Belongs to the TOP6B family.</text>
</comment>
<organism>
    <name type="scientific">Saccharolobus islandicus (strain L.S.2.15 / Lassen #1)</name>
    <name type="common">Sulfolobus islandicus</name>
    <dbReference type="NCBI Taxonomy" id="429572"/>
    <lineage>
        <taxon>Archaea</taxon>
        <taxon>Thermoproteota</taxon>
        <taxon>Thermoprotei</taxon>
        <taxon>Sulfolobales</taxon>
        <taxon>Sulfolobaceae</taxon>
        <taxon>Saccharolobus</taxon>
    </lineage>
</organism>
<proteinExistence type="inferred from homology"/>
<protein>
    <recommendedName>
        <fullName evidence="1">Type 2 DNA topoisomerase 6 subunit B</fullName>
        <ecNumber evidence="1">5.6.2.2</ecNumber>
    </recommendedName>
    <alternativeName>
        <fullName evidence="1">Type II DNA topoisomerase VI subunit B</fullName>
        <shortName evidence="1">TopoVI-B</shortName>
    </alternativeName>
</protein>
<name>TOP6B_SACI2</name>
<keyword id="KW-0067">ATP-binding</keyword>
<keyword id="KW-0238">DNA-binding</keyword>
<keyword id="KW-0413">Isomerase</keyword>
<keyword id="KW-0547">Nucleotide-binding</keyword>
<keyword id="KW-0799">Topoisomerase</keyword>
<accession>C3MPN7</accession>
<reference key="1">
    <citation type="journal article" date="2009" name="Proc. Natl. Acad. Sci. U.S.A.">
        <title>Biogeography of the Sulfolobus islandicus pan-genome.</title>
        <authorList>
            <person name="Reno M.L."/>
            <person name="Held N.L."/>
            <person name="Fields C.J."/>
            <person name="Burke P.V."/>
            <person name="Whitaker R.J."/>
        </authorList>
    </citation>
    <scope>NUCLEOTIDE SEQUENCE [LARGE SCALE GENOMIC DNA]</scope>
    <source>
        <strain>L.S.2.15 / Lassen #1</strain>
    </source>
</reference>